<evidence type="ECO:0000255" key="1">
    <source>
        <dbReference type="HAMAP-Rule" id="MF_00050"/>
    </source>
</evidence>
<comment type="function">
    <text evidence="1">Associates with the EF-Tu.GDP complex and induces the exchange of GDP to GTP. It remains bound to the aminoacyl-tRNA.EF-Tu.GTP complex up to the GTP hydrolysis stage on the ribosome.</text>
</comment>
<comment type="subcellular location">
    <subcellularLocation>
        <location evidence="1">Cytoplasm</location>
    </subcellularLocation>
</comment>
<comment type="similarity">
    <text evidence="1">Belongs to the EF-Ts family.</text>
</comment>
<proteinExistence type="inferred from homology"/>
<accession>Q662P0</accession>
<organism>
    <name type="scientific">Borrelia garinii subsp. bavariensis (strain ATCC BAA-2496 / DSM 23469 / PBi)</name>
    <name type="common">Borreliella bavariensis</name>
    <dbReference type="NCBI Taxonomy" id="290434"/>
    <lineage>
        <taxon>Bacteria</taxon>
        <taxon>Pseudomonadati</taxon>
        <taxon>Spirochaetota</taxon>
        <taxon>Spirochaetia</taxon>
        <taxon>Spirochaetales</taxon>
        <taxon>Borreliaceae</taxon>
        <taxon>Borreliella</taxon>
    </lineage>
</organism>
<keyword id="KW-0963">Cytoplasm</keyword>
<keyword id="KW-0251">Elongation factor</keyword>
<keyword id="KW-0648">Protein biosynthesis</keyword>
<feature type="chain" id="PRO_0000161086" description="Elongation factor Ts">
    <location>
        <begin position="1"/>
        <end position="279"/>
    </location>
</feature>
<feature type="region of interest" description="Involved in Mg(2+) ion dislocation from EF-Tu" evidence="1">
    <location>
        <begin position="80"/>
        <end position="83"/>
    </location>
</feature>
<sequence length="279" mass="31268">MSIISPQDVKRLREETNAGFGDCKKALSAASGDFELAKKKLREMGIASAEKRLDRDAKEGRVFSYSNNIHAGLLLVSCETDFVALNHNFVNLGNSLIKELVESGRSFPTASQELELKNLAATIKENIQVKKIFITEIQSNEFVKIYLHGEQSKIGVLVKLKVDDFSKTEDKMFQNFAMDLALHVAAFAPIYLGNDDVCPNYIKEQEEIFAKQLEFSGKSESILKGIVAGKIKKHLAEISLLEQSFVKNDKVTVREMLEEISKAISSKIEIVEFKYLRIG</sequence>
<name>EFTS_BORGP</name>
<dbReference type="EMBL" id="CP000013">
    <property type="protein sequence ID" value="AAU06981.1"/>
    <property type="molecule type" value="Genomic_DNA"/>
</dbReference>
<dbReference type="RefSeq" id="WP_011193474.1">
    <property type="nucleotide sequence ID" value="NZ_CP028872.1"/>
</dbReference>
<dbReference type="SMR" id="Q662P0"/>
<dbReference type="GeneID" id="45160918"/>
<dbReference type="KEGG" id="bga:BG0123"/>
<dbReference type="eggNOG" id="COG0264">
    <property type="taxonomic scope" value="Bacteria"/>
</dbReference>
<dbReference type="HOGENOM" id="CLU_047155_0_0_12"/>
<dbReference type="OrthoDB" id="9808348at2"/>
<dbReference type="Proteomes" id="UP000002276">
    <property type="component" value="Chromosome"/>
</dbReference>
<dbReference type="GO" id="GO:0005737">
    <property type="term" value="C:cytoplasm"/>
    <property type="evidence" value="ECO:0007669"/>
    <property type="project" value="UniProtKB-SubCell"/>
</dbReference>
<dbReference type="GO" id="GO:0003746">
    <property type="term" value="F:translation elongation factor activity"/>
    <property type="evidence" value="ECO:0007669"/>
    <property type="project" value="UniProtKB-UniRule"/>
</dbReference>
<dbReference type="CDD" id="cd14275">
    <property type="entry name" value="UBA_EF-Ts"/>
    <property type="match status" value="1"/>
</dbReference>
<dbReference type="FunFam" id="1.10.8.10:FF:000001">
    <property type="entry name" value="Elongation factor Ts"/>
    <property type="match status" value="1"/>
</dbReference>
<dbReference type="Gene3D" id="1.10.286.20">
    <property type="match status" value="1"/>
</dbReference>
<dbReference type="Gene3D" id="1.10.8.10">
    <property type="entry name" value="DNA helicase RuvA subunit, C-terminal domain"/>
    <property type="match status" value="1"/>
</dbReference>
<dbReference type="Gene3D" id="3.30.479.20">
    <property type="entry name" value="Elongation factor Ts, dimerisation domain"/>
    <property type="match status" value="2"/>
</dbReference>
<dbReference type="HAMAP" id="MF_00050">
    <property type="entry name" value="EF_Ts"/>
    <property type="match status" value="1"/>
</dbReference>
<dbReference type="InterPro" id="IPR036402">
    <property type="entry name" value="EF-Ts_dimer_sf"/>
</dbReference>
<dbReference type="InterPro" id="IPR001816">
    <property type="entry name" value="Transl_elong_EFTs/EF1B"/>
</dbReference>
<dbReference type="InterPro" id="IPR014039">
    <property type="entry name" value="Transl_elong_EFTs/EF1B_dimer"/>
</dbReference>
<dbReference type="InterPro" id="IPR018101">
    <property type="entry name" value="Transl_elong_Ts_CS"/>
</dbReference>
<dbReference type="InterPro" id="IPR009060">
    <property type="entry name" value="UBA-like_sf"/>
</dbReference>
<dbReference type="NCBIfam" id="TIGR00116">
    <property type="entry name" value="tsf"/>
    <property type="match status" value="1"/>
</dbReference>
<dbReference type="PANTHER" id="PTHR11741">
    <property type="entry name" value="ELONGATION FACTOR TS"/>
    <property type="match status" value="1"/>
</dbReference>
<dbReference type="PANTHER" id="PTHR11741:SF0">
    <property type="entry name" value="ELONGATION FACTOR TS, MITOCHONDRIAL"/>
    <property type="match status" value="1"/>
</dbReference>
<dbReference type="Pfam" id="PF00889">
    <property type="entry name" value="EF_TS"/>
    <property type="match status" value="1"/>
</dbReference>
<dbReference type="SUPFAM" id="SSF54713">
    <property type="entry name" value="Elongation factor Ts (EF-Ts), dimerisation domain"/>
    <property type="match status" value="2"/>
</dbReference>
<dbReference type="SUPFAM" id="SSF46934">
    <property type="entry name" value="UBA-like"/>
    <property type="match status" value="1"/>
</dbReference>
<dbReference type="PROSITE" id="PS01126">
    <property type="entry name" value="EF_TS_1"/>
    <property type="match status" value="1"/>
</dbReference>
<dbReference type="PROSITE" id="PS01127">
    <property type="entry name" value="EF_TS_2"/>
    <property type="match status" value="1"/>
</dbReference>
<gene>
    <name evidence="1" type="primary">tsf</name>
    <name type="ordered locus">BG0123</name>
</gene>
<reference key="1">
    <citation type="journal article" date="2004" name="Nucleic Acids Res.">
        <title>Comparative analysis of the Borrelia garinii genome.</title>
        <authorList>
            <person name="Gloeckner G."/>
            <person name="Lehmann R."/>
            <person name="Romualdi A."/>
            <person name="Pradella S."/>
            <person name="Schulte-Spechtel U."/>
            <person name="Schilhabel M."/>
            <person name="Wilske B."/>
            <person name="Suehnel J."/>
            <person name="Platzer M."/>
        </authorList>
    </citation>
    <scope>NUCLEOTIDE SEQUENCE [LARGE SCALE GENOMIC DNA]</scope>
    <source>
        <strain>ATCC BAA-2496 / DSM 23469 / PBi</strain>
    </source>
</reference>
<protein>
    <recommendedName>
        <fullName evidence="1">Elongation factor Ts</fullName>
        <shortName evidence="1">EF-Ts</shortName>
    </recommendedName>
</protein>